<organism>
    <name type="scientific">Xanthomonas euvesicatoria pv. vesicatoria (strain 85-10)</name>
    <name type="common">Xanthomonas campestris pv. vesicatoria</name>
    <dbReference type="NCBI Taxonomy" id="316273"/>
    <lineage>
        <taxon>Bacteria</taxon>
        <taxon>Pseudomonadati</taxon>
        <taxon>Pseudomonadota</taxon>
        <taxon>Gammaproteobacteria</taxon>
        <taxon>Lysobacterales</taxon>
        <taxon>Lysobacteraceae</taxon>
        <taxon>Xanthomonas</taxon>
    </lineage>
</organism>
<keyword id="KW-0028">Amino-acid biosynthesis</keyword>
<keyword id="KW-0057">Aromatic amino acid biosynthesis</keyword>
<keyword id="KW-0328">Glycosyltransferase</keyword>
<keyword id="KW-0460">Magnesium</keyword>
<keyword id="KW-0479">Metal-binding</keyword>
<keyword id="KW-0808">Transferase</keyword>
<keyword id="KW-0822">Tryptophan biosynthesis</keyword>
<comment type="function">
    <text evidence="1">Catalyzes the transfer of the phosphoribosyl group of 5-phosphorylribose-1-pyrophosphate (PRPP) to anthranilate to yield N-(5'-phosphoribosyl)-anthranilate (PRA).</text>
</comment>
<comment type="catalytic activity">
    <reaction evidence="1">
        <text>N-(5-phospho-beta-D-ribosyl)anthranilate + diphosphate = 5-phospho-alpha-D-ribose 1-diphosphate + anthranilate</text>
        <dbReference type="Rhea" id="RHEA:11768"/>
        <dbReference type="ChEBI" id="CHEBI:16567"/>
        <dbReference type="ChEBI" id="CHEBI:18277"/>
        <dbReference type="ChEBI" id="CHEBI:33019"/>
        <dbReference type="ChEBI" id="CHEBI:58017"/>
        <dbReference type="EC" id="2.4.2.18"/>
    </reaction>
</comment>
<comment type="cofactor">
    <cofactor evidence="1">
        <name>Mg(2+)</name>
        <dbReference type="ChEBI" id="CHEBI:18420"/>
    </cofactor>
    <text evidence="1">Binds 2 magnesium ions per monomer.</text>
</comment>
<comment type="pathway">
    <text evidence="1">Amino-acid biosynthesis; L-tryptophan biosynthesis; L-tryptophan from chorismate: step 2/5.</text>
</comment>
<comment type="subunit">
    <text evidence="1">Homodimer.</text>
</comment>
<comment type="similarity">
    <text evidence="1">Belongs to the anthranilate phosphoribosyltransferase family.</text>
</comment>
<reference key="1">
    <citation type="journal article" date="2005" name="J. Bacteriol.">
        <title>Insights into genome plasticity and pathogenicity of the plant pathogenic Bacterium Xanthomonas campestris pv. vesicatoria revealed by the complete genome sequence.</title>
        <authorList>
            <person name="Thieme F."/>
            <person name="Koebnik R."/>
            <person name="Bekel T."/>
            <person name="Berger C."/>
            <person name="Boch J."/>
            <person name="Buettner D."/>
            <person name="Caldana C."/>
            <person name="Gaigalat L."/>
            <person name="Goesmann A."/>
            <person name="Kay S."/>
            <person name="Kirchner O."/>
            <person name="Lanz C."/>
            <person name="Linke B."/>
            <person name="McHardy A.C."/>
            <person name="Meyer F."/>
            <person name="Mittenhuber G."/>
            <person name="Nies D.H."/>
            <person name="Niesbach-Kloesgen U."/>
            <person name="Patschkowski T."/>
            <person name="Rueckert C."/>
            <person name="Rupp O."/>
            <person name="Schneiker S."/>
            <person name="Schuster S.C."/>
            <person name="Vorhoelter F.J."/>
            <person name="Weber E."/>
            <person name="Puehler A."/>
            <person name="Bonas U."/>
            <person name="Bartels D."/>
            <person name="Kaiser O."/>
        </authorList>
    </citation>
    <scope>NUCLEOTIDE SEQUENCE [LARGE SCALE GENOMIC DNA]</scope>
    <source>
        <strain>85-10</strain>
    </source>
</reference>
<name>TRPD_XANE5</name>
<proteinExistence type="inferred from homology"/>
<sequence>MPITPQEALQRTIEHREIFHDEMVELMRQVMRGEVSDMMVAAILTGLRVKKETIGEIAGAATVMREFSRRVDVADRQHMVDIVGTGGDGSDTFNISTCAMFVAAAGGAKVAKHGNRSVSSKSGSADALEALGAVIELQPEQVASALAHTGIGFMYAPVHHPAMKVVAPVRREMGVRTIFNILGPLTNPAGSPNILMGVFHPDLVGIQARVLHELGAERALVVWGRDGMDELSLGAGTLVGELRDGQVREYEVHPEDFGIAMSASRNLKVADAAQSRAMLLQVLDNVPGPALDIVALNAGAALYVAGVAHSIADGVLRARAVIADGSARARVDAYVAYTRQLAVQA</sequence>
<dbReference type="EC" id="2.4.2.18" evidence="1"/>
<dbReference type="EMBL" id="AM039952">
    <property type="protein sequence ID" value="CAJ22147.1"/>
    <property type="molecule type" value="Genomic_DNA"/>
</dbReference>
<dbReference type="RefSeq" id="WP_011346177.1">
    <property type="nucleotide sequence ID" value="NZ_CP017190.1"/>
</dbReference>
<dbReference type="SMR" id="Q3BYB6"/>
<dbReference type="STRING" id="456327.BJD11_20295"/>
<dbReference type="KEGG" id="xcv:XCV0516"/>
<dbReference type="eggNOG" id="COG0547">
    <property type="taxonomic scope" value="Bacteria"/>
</dbReference>
<dbReference type="HOGENOM" id="CLU_034315_2_1_6"/>
<dbReference type="UniPathway" id="UPA00035">
    <property type="reaction ID" value="UER00041"/>
</dbReference>
<dbReference type="Proteomes" id="UP000007069">
    <property type="component" value="Chromosome"/>
</dbReference>
<dbReference type="GO" id="GO:0005829">
    <property type="term" value="C:cytosol"/>
    <property type="evidence" value="ECO:0007669"/>
    <property type="project" value="TreeGrafter"/>
</dbReference>
<dbReference type="GO" id="GO:0004048">
    <property type="term" value="F:anthranilate phosphoribosyltransferase activity"/>
    <property type="evidence" value="ECO:0007669"/>
    <property type="project" value="UniProtKB-UniRule"/>
</dbReference>
<dbReference type="GO" id="GO:0000287">
    <property type="term" value="F:magnesium ion binding"/>
    <property type="evidence" value="ECO:0007669"/>
    <property type="project" value="UniProtKB-UniRule"/>
</dbReference>
<dbReference type="GO" id="GO:0000162">
    <property type="term" value="P:L-tryptophan biosynthetic process"/>
    <property type="evidence" value="ECO:0007669"/>
    <property type="project" value="UniProtKB-UniRule"/>
</dbReference>
<dbReference type="FunFam" id="1.20.970.10:FF:000006">
    <property type="entry name" value="Anthranilate phosphoribosyltransferase"/>
    <property type="match status" value="1"/>
</dbReference>
<dbReference type="FunFam" id="3.40.1030.10:FF:000002">
    <property type="entry name" value="Anthranilate phosphoribosyltransferase"/>
    <property type="match status" value="1"/>
</dbReference>
<dbReference type="Gene3D" id="3.40.1030.10">
    <property type="entry name" value="Nucleoside phosphorylase/phosphoribosyltransferase catalytic domain"/>
    <property type="match status" value="1"/>
</dbReference>
<dbReference type="Gene3D" id="1.20.970.10">
    <property type="entry name" value="Transferase, Pyrimidine Nucleoside Phosphorylase, Chain C"/>
    <property type="match status" value="1"/>
</dbReference>
<dbReference type="HAMAP" id="MF_00211">
    <property type="entry name" value="TrpD"/>
    <property type="match status" value="1"/>
</dbReference>
<dbReference type="InterPro" id="IPR005940">
    <property type="entry name" value="Anthranilate_Pribosyl_Tfrase"/>
</dbReference>
<dbReference type="InterPro" id="IPR000312">
    <property type="entry name" value="Glycosyl_Trfase_fam3"/>
</dbReference>
<dbReference type="InterPro" id="IPR017459">
    <property type="entry name" value="Glycosyl_Trfase_fam3_N_dom"/>
</dbReference>
<dbReference type="InterPro" id="IPR036320">
    <property type="entry name" value="Glycosyl_Trfase_fam3_N_dom_sf"/>
</dbReference>
<dbReference type="InterPro" id="IPR035902">
    <property type="entry name" value="Nuc_phospho_transferase"/>
</dbReference>
<dbReference type="NCBIfam" id="TIGR01245">
    <property type="entry name" value="trpD"/>
    <property type="match status" value="1"/>
</dbReference>
<dbReference type="PANTHER" id="PTHR43285">
    <property type="entry name" value="ANTHRANILATE PHOSPHORIBOSYLTRANSFERASE"/>
    <property type="match status" value="1"/>
</dbReference>
<dbReference type="PANTHER" id="PTHR43285:SF2">
    <property type="entry name" value="ANTHRANILATE PHOSPHORIBOSYLTRANSFERASE"/>
    <property type="match status" value="1"/>
</dbReference>
<dbReference type="Pfam" id="PF02885">
    <property type="entry name" value="Glycos_trans_3N"/>
    <property type="match status" value="1"/>
</dbReference>
<dbReference type="Pfam" id="PF00591">
    <property type="entry name" value="Glycos_transf_3"/>
    <property type="match status" value="1"/>
</dbReference>
<dbReference type="SUPFAM" id="SSF52418">
    <property type="entry name" value="Nucleoside phosphorylase/phosphoribosyltransferase catalytic domain"/>
    <property type="match status" value="1"/>
</dbReference>
<dbReference type="SUPFAM" id="SSF47648">
    <property type="entry name" value="Nucleoside phosphorylase/phosphoribosyltransferase N-terminal domain"/>
    <property type="match status" value="1"/>
</dbReference>
<protein>
    <recommendedName>
        <fullName evidence="1">Anthranilate phosphoribosyltransferase</fullName>
        <ecNumber evidence="1">2.4.2.18</ecNumber>
    </recommendedName>
</protein>
<accession>Q3BYB6</accession>
<feature type="chain" id="PRO_0000227199" description="Anthranilate phosphoribosyltransferase">
    <location>
        <begin position="1"/>
        <end position="345"/>
    </location>
</feature>
<feature type="binding site" evidence="1">
    <location>
        <position position="84"/>
    </location>
    <ligand>
        <name>5-phospho-alpha-D-ribose 1-diphosphate</name>
        <dbReference type="ChEBI" id="CHEBI:58017"/>
    </ligand>
</feature>
<feature type="binding site" evidence="1">
    <location>
        <position position="84"/>
    </location>
    <ligand>
        <name>anthranilate</name>
        <dbReference type="ChEBI" id="CHEBI:16567"/>
        <label>1</label>
    </ligand>
</feature>
<feature type="binding site" evidence="1">
    <location>
        <begin position="87"/>
        <end position="88"/>
    </location>
    <ligand>
        <name>5-phospho-alpha-D-ribose 1-diphosphate</name>
        <dbReference type="ChEBI" id="CHEBI:58017"/>
    </ligand>
</feature>
<feature type="binding site" evidence="1">
    <location>
        <position position="92"/>
    </location>
    <ligand>
        <name>5-phospho-alpha-D-ribose 1-diphosphate</name>
        <dbReference type="ChEBI" id="CHEBI:58017"/>
    </ligand>
</feature>
<feature type="binding site" evidence="1">
    <location>
        <begin position="94"/>
        <end position="97"/>
    </location>
    <ligand>
        <name>5-phospho-alpha-D-ribose 1-diphosphate</name>
        <dbReference type="ChEBI" id="CHEBI:58017"/>
    </ligand>
</feature>
<feature type="binding site" evidence="1">
    <location>
        <position position="96"/>
    </location>
    <ligand>
        <name>Mg(2+)</name>
        <dbReference type="ChEBI" id="CHEBI:18420"/>
        <label>1</label>
    </ligand>
</feature>
<feature type="binding site" evidence="1">
    <location>
        <begin position="112"/>
        <end position="120"/>
    </location>
    <ligand>
        <name>5-phospho-alpha-D-ribose 1-diphosphate</name>
        <dbReference type="ChEBI" id="CHEBI:58017"/>
    </ligand>
</feature>
<feature type="binding site" evidence="1">
    <location>
        <position position="115"/>
    </location>
    <ligand>
        <name>anthranilate</name>
        <dbReference type="ChEBI" id="CHEBI:16567"/>
        <label>1</label>
    </ligand>
</feature>
<feature type="binding site" evidence="1">
    <location>
        <position position="124"/>
    </location>
    <ligand>
        <name>5-phospho-alpha-D-ribose 1-diphosphate</name>
        <dbReference type="ChEBI" id="CHEBI:58017"/>
    </ligand>
</feature>
<feature type="binding site" evidence="1">
    <location>
        <position position="170"/>
    </location>
    <ligand>
        <name>anthranilate</name>
        <dbReference type="ChEBI" id="CHEBI:16567"/>
        <label>2</label>
    </ligand>
</feature>
<feature type="binding site" evidence="1">
    <location>
        <position position="229"/>
    </location>
    <ligand>
        <name>Mg(2+)</name>
        <dbReference type="ChEBI" id="CHEBI:18420"/>
        <label>2</label>
    </ligand>
</feature>
<feature type="binding site" evidence="1">
    <location>
        <position position="230"/>
    </location>
    <ligand>
        <name>Mg(2+)</name>
        <dbReference type="ChEBI" id="CHEBI:18420"/>
        <label>1</label>
    </ligand>
</feature>
<feature type="binding site" evidence="1">
    <location>
        <position position="230"/>
    </location>
    <ligand>
        <name>Mg(2+)</name>
        <dbReference type="ChEBI" id="CHEBI:18420"/>
        <label>2</label>
    </ligand>
</feature>
<evidence type="ECO:0000255" key="1">
    <source>
        <dbReference type="HAMAP-Rule" id="MF_00211"/>
    </source>
</evidence>
<gene>
    <name evidence="1" type="primary">trpD</name>
    <name type="ordered locus">XCV0516</name>
</gene>